<keyword id="KW-0012">Acyltransferase</keyword>
<keyword id="KW-0133">Cell shape</keyword>
<keyword id="KW-0961">Cell wall biogenesis/degradation</keyword>
<keyword id="KW-0963">Cytoplasm</keyword>
<keyword id="KW-0460">Magnesium</keyword>
<keyword id="KW-0479">Metal-binding</keyword>
<keyword id="KW-0511">Multifunctional enzyme</keyword>
<keyword id="KW-0548">Nucleotidyltransferase</keyword>
<keyword id="KW-0573">Peptidoglycan synthesis</keyword>
<keyword id="KW-0677">Repeat</keyword>
<keyword id="KW-0808">Transferase</keyword>
<dbReference type="EC" id="2.7.7.23" evidence="1"/>
<dbReference type="EC" id="2.3.1.157" evidence="1"/>
<dbReference type="EMBL" id="CU928163">
    <property type="protein sequence ID" value="CAR15400.1"/>
    <property type="molecule type" value="Genomic_DNA"/>
</dbReference>
<dbReference type="RefSeq" id="WP_000933736.1">
    <property type="nucleotide sequence ID" value="NC_011751.1"/>
</dbReference>
<dbReference type="RefSeq" id="YP_002414895.1">
    <property type="nucleotide sequence ID" value="NC_011751.1"/>
</dbReference>
<dbReference type="SMR" id="B7NF46"/>
<dbReference type="STRING" id="585056.ECUMN_4260"/>
<dbReference type="GeneID" id="75205448"/>
<dbReference type="KEGG" id="eum:ECUMN_4260"/>
<dbReference type="PATRIC" id="fig|585056.7.peg.4431"/>
<dbReference type="HOGENOM" id="CLU_029499_15_2_6"/>
<dbReference type="UniPathway" id="UPA00113">
    <property type="reaction ID" value="UER00532"/>
</dbReference>
<dbReference type="UniPathway" id="UPA00113">
    <property type="reaction ID" value="UER00533"/>
</dbReference>
<dbReference type="UniPathway" id="UPA00973"/>
<dbReference type="Proteomes" id="UP000007097">
    <property type="component" value="Chromosome"/>
</dbReference>
<dbReference type="GO" id="GO:0005737">
    <property type="term" value="C:cytoplasm"/>
    <property type="evidence" value="ECO:0007669"/>
    <property type="project" value="UniProtKB-SubCell"/>
</dbReference>
<dbReference type="GO" id="GO:0016020">
    <property type="term" value="C:membrane"/>
    <property type="evidence" value="ECO:0007669"/>
    <property type="project" value="GOC"/>
</dbReference>
<dbReference type="GO" id="GO:0019134">
    <property type="term" value="F:glucosamine-1-phosphate N-acetyltransferase activity"/>
    <property type="evidence" value="ECO:0007669"/>
    <property type="project" value="UniProtKB-UniRule"/>
</dbReference>
<dbReference type="GO" id="GO:0000287">
    <property type="term" value="F:magnesium ion binding"/>
    <property type="evidence" value="ECO:0007669"/>
    <property type="project" value="UniProtKB-UniRule"/>
</dbReference>
<dbReference type="GO" id="GO:0003977">
    <property type="term" value="F:UDP-N-acetylglucosamine diphosphorylase activity"/>
    <property type="evidence" value="ECO:0007669"/>
    <property type="project" value="UniProtKB-UniRule"/>
</dbReference>
<dbReference type="GO" id="GO:0000902">
    <property type="term" value="P:cell morphogenesis"/>
    <property type="evidence" value="ECO:0007669"/>
    <property type="project" value="UniProtKB-UniRule"/>
</dbReference>
<dbReference type="GO" id="GO:0071555">
    <property type="term" value="P:cell wall organization"/>
    <property type="evidence" value="ECO:0007669"/>
    <property type="project" value="UniProtKB-KW"/>
</dbReference>
<dbReference type="GO" id="GO:0009245">
    <property type="term" value="P:lipid A biosynthetic process"/>
    <property type="evidence" value="ECO:0007669"/>
    <property type="project" value="UniProtKB-UniRule"/>
</dbReference>
<dbReference type="GO" id="GO:0009252">
    <property type="term" value="P:peptidoglycan biosynthetic process"/>
    <property type="evidence" value="ECO:0007669"/>
    <property type="project" value="UniProtKB-UniRule"/>
</dbReference>
<dbReference type="GO" id="GO:0008360">
    <property type="term" value="P:regulation of cell shape"/>
    <property type="evidence" value="ECO:0007669"/>
    <property type="project" value="UniProtKB-KW"/>
</dbReference>
<dbReference type="GO" id="GO:0006048">
    <property type="term" value="P:UDP-N-acetylglucosamine biosynthetic process"/>
    <property type="evidence" value="ECO:0007669"/>
    <property type="project" value="UniProtKB-UniPathway"/>
</dbReference>
<dbReference type="CDD" id="cd02540">
    <property type="entry name" value="GT2_GlmU_N_bac"/>
    <property type="match status" value="1"/>
</dbReference>
<dbReference type="CDD" id="cd03353">
    <property type="entry name" value="LbH_GlmU_C"/>
    <property type="match status" value="1"/>
</dbReference>
<dbReference type="FunFam" id="2.160.10.10:FF:000011">
    <property type="entry name" value="Bifunctional protein GlmU"/>
    <property type="match status" value="1"/>
</dbReference>
<dbReference type="FunFam" id="3.90.550.10:FF:000006">
    <property type="entry name" value="Bifunctional protein GlmU"/>
    <property type="match status" value="1"/>
</dbReference>
<dbReference type="Gene3D" id="2.160.10.10">
    <property type="entry name" value="Hexapeptide repeat proteins"/>
    <property type="match status" value="1"/>
</dbReference>
<dbReference type="Gene3D" id="3.90.550.10">
    <property type="entry name" value="Spore Coat Polysaccharide Biosynthesis Protein SpsA, Chain A"/>
    <property type="match status" value="1"/>
</dbReference>
<dbReference type="HAMAP" id="MF_01631">
    <property type="entry name" value="GlmU"/>
    <property type="match status" value="1"/>
</dbReference>
<dbReference type="InterPro" id="IPR005882">
    <property type="entry name" value="Bifunctional_GlmU"/>
</dbReference>
<dbReference type="InterPro" id="IPR050065">
    <property type="entry name" value="GlmU-like"/>
</dbReference>
<dbReference type="InterPro" id="IPR038009">
    <property type="entry name" value="GlmU_C_LbH"/>
</dbReference>
<dbReference type="InterPro" id="IPR001451">
    <property type="entry name" value="Hexapep"/>
</dbReference>
<dbReference type="InterPro" id="IPR018357">
    <property type="entry name" value="Hexapep_transf_CS"/>
</dbReference>
<dbReference type="InterPro" id="IPR025877">
    <property type="entry name" value="MobA-like_NTP_Trfase"/>
</dbReference>
<dbReference type="InterPro" id="IPR029044">
    <property type="entry name" value="Nucleotide-diphossugar_trans"/>
</dbReference>
<dbReference type="InterPro" id="IPR011004">
    <property type="entry name" value="Trimer_LpxA-like_sf"/>
</dbReference>
<dbReference type="NCBIfam" id="TIGR01173">
    <property type="entry name" value="glmU"/>
    <property type="match status" value="1"/>
</dbReference>
<dbReference type="NCBIfam" id="NF006986">
    <property type="entry name" value="PRK09451.1"/>
    <property type="match status" value="1"/>
</dbReference>
<dbReference type="PANTHER" id="PTHR43584:SF3">
    <property type="entry name" value="BIFUNCTIONAL PROTEIN GLMU"/>
    <property type="match status" value="1"/>
</dbReference>
<dbReference type="PANTHER" id="PTHR43584">
    <property type="entry name" value="NUCLEOTIDYL TRANSFERASE"/>
    <property type="match status" value="1"/>
</dbReference>
<dbReference type="Pfam" id="PF00132">
    <property type="entry name" value="Hexapep"/>
    <property type="match status" value="1"/>
</dbReference>
<dbReference type="Pfam" id="PF12804">
    <property type="entry name" value="NTP_transf_3"/>
    <property type="match status" value="1"/>
</dbReference>
<dbReference type="SUPFAM" id="SSF53448">
    <property type="entry name" value="Nucleotide-diphospho-sugar transferases"/>
    <property type="match status" value="1"/>
</dbReference>
<dbReference type="SUPFAM" id="SSF51161">
    <property type="entry name" value="Trimeric LpxA-like enzymes"/>
    <property type="match status" value="1"/>
</dbReference>
<dbReference type="PROSITE" id="PS00101">
    <property type="entry name" value="HEXAPEP_TRANSFERASES"/>
    <property type="match status" value="1"/>
</dbReference>
<name>GLMU_ECOLU</name>
<organism>
    <name type="scientific">Escherichia coli O17:K52:H18 (strain UMN026 / ExPEC)</name>
    <dbReference type="NCBI Taxonomy" id="585056"/>
    <lineage>
        <taxon>Bacteria</taxon>
        <taxon>Pseudomonadati</taxon>
        <taxon>Pseudomonadota</taxon>
        <taxon>Gammaproteobacteria</taxon>
        <taxon>Enterobacterales</taxon>
        <taxon>Enterobacteriaceae</taxon>
        <taxon>Escherichia</taxon>
    </lineage>
</organism>
<sequence length="456" mass="49190">MLNNAMSVVILAAGKGTRMYSDLPKVLHTLAGKAMVQHVIDAANELGAAHVHLVYGHGGDLLKQALKDDNLNWVLQAEQLGTGHAMQQAAPFFADDEDILMLYGDVPLISVETLQRLRDAKPQGGIGLLTVKLDDPTGYGRITRENGKVTGIVEHKDATDEQRQIQEINTGILIANGADMKRWLAKLTNNNAQGEYYITDIIALAYQEGREIVAVHPQRLSEVEGVNNRLQLSRLERVYQSEQAEKLLLAGVMLRDPARFDLRGTLTHGRDVEIDTNVIIEGNVTLGHRVKIGTGCVIKNSVIGDDCEISPYTVVEDANLAAACTIGPFARLRPGAELLEGAHVGNFVEMKKARLGKGSKAGHLTYLGDAEIGDNVNIGAGTITCNYDGANKFKTIIGDDVFVGSDTQLVAPVTVGKGATIAAGTTVTRNVGENALAISRVPQTQKEGWRRPVKKK</sequence>
<proteinExistence type="inferred from homology"/>
<reference key="1">
    <citation type="journal article" date="2009" name="PLoS Genet.">
        <title>Organised genome dynamics in the Escherichia coli species results in highly diverse adaptive paths.</title>
        <authorList>
            <person name="Touchon M."/>
            <person name="Hoede C."/>
            <person name="Tenaillon O."/>
            <person name="Barbe V."/>
            <person name="Baeriswyl S."/>
            <person name="Bidet P."/>
            <person name="Bingen E."/>
            <person name="Bonacorsi S."/>
            <person name="Bouchier C."/>
            <person name="Bouvet O."/>
            <person name="Calteau A."/>
            <person name="Chiapello H."/>
            <person name="Clermont O."/>
            <person name="Cruveiller S."/>
            <person name="Danchin A."/>
            <person name="Diard M."/>
            <person name="Dossat C."/>
            <person name="Karoui M.E."/>
            <person name="Frapy E."/>
            <person name="Garry L."/>
            <person name="Ghigo J.M."/>
            <person name="Gilles A.M."/>
            <person name="Johnson J."/>
            <person name="Le Bouguenec C."/>
            <person name="Lescat M."/>
            <person name="Mangenot S."/>
            <person name="Martinez-Jehanne V."/>
            <person name="Matic I."/>
            <person name="Nassif X."/>
            <person name="Oztas S."/>
            <person name="Petit M.A."/>
            <person name="Pichon C."/>
            <person name="Rouy Z."/>
            <person name="Ruf C.S."/>
            <person name="Schneider D."/>
            <person name="Tourret J."/>
            <person name="Vacherie B."/>
            <person name="Vallenet D."/>
            <person name="Medigue C."/>
            <person name="Rocha E.P.C."/>
            <person name="Denamur E."/>
        </authorList>
    </citation>
    <scope>NUCLEOTIDE SEQUENCE [LARGE SCALE GENOMIC DNA]</scope>
    <source>
        <strain>UMN026 / ExPEC</strain>
    </source>
</reference>
<evidence type="ECO:0000255" key="1">
    <source>
        <dbReference type="HAMAP-Rule" id="MF_01631"/>
    </source>
</evidence>
<gene>
    <name evidence="1" type="primary">glmU</name>
    <name type="ordered locus">ECUMN_4260</name>
</gene>
<accession>B7NF46</accession>
<comment type="function">
    <text evidence="1">Catalyzes the last two sequential reactions in the de novo biosynthetic pathway for UDP-N-acetylglucosamine (UDP-GlcNAc). The C-terminal domain catalyzes the transfer of acetyl group from acetyl coenzyme A to glucosamine-1-phosphate (GlcN-1-P) to produce N-acetylglucosamine-1-phosphate (GlcNAc-1-P), which is converted into UDP-GlcNAc by the transfer of uridine 5-monophosphate (from uridine 5-triphosphate), a reaction catalyzed by the N-terminal domain.</text>
</comment>
<comment type="catalytic activity">
    <reaction evidence="1">
        <text>alpha-D-glucosamine 1-phosphate + acetyl-CoA = N-acetyl-alpha-D-glucosamine 1-phosphate + CoA + H(+)</text>
        <dbReference type="Rhea" id="RHEA:13725"/>
        <dbReference type="ChEBI" id="CHEBI:15378"/>
        <dbReference type="ChEBI" id="CHEBI:57287"/>
        <dbReference type="ChEBI" id="CHEBI:57288"/>
        <dbReference type="ChEBI" id="CHEBI:57776"/>
        <dbReference type="ChEBI" id="CHEBI:58516"/>
        <dbReference type="EC" id="2.3.1.157"/>
    </reaction>
</comment>
<comment type="catalytic activity">
    <reaction evidence="1">
        <text>N-acetyl-alpha-D-glucosamine 1-phosphate + UTP + H(+) = UDP-N-acetyl-alpha-D-glucosamine + diphosphate</text>
        <dbReference type="Rhea" id="RHEA:13509"/>
        <dbReference type="ChEBI" id="CHEBI:15378"/>
        <dbReference type="ChEBI" id="CHEBI:33019"/>
        <dbReference type="ChEBI" id="CHEBI:46398"/>
        <dbReference type="ChEBI" id="CHEBI:57705"/>
        <dbReference type="ChEBI" id="CHEBI:57776"/>
        <dbReference type="EC" id="2.7.7.23"/>
    </reaction>
</comment>
<comment type="cofactor">
    <cofactor evidence="1">
        <name>Mg(2+)</name>
        <dbReference type="ChEBI" id="CHEBI:18420"/>
    </cofactor>
    <text evidence="1">Binds 1 Mg(2+) ion per subunit.</text>
</comment>
<comment type="pathway">
    <text evidence="1">Nucleotide-sugar biosynthesis; UDP-N-acetyl-alpha-D-glucosamine biosynthesis; N-acetyl-alpha-D-glucosamine 1-phosphate from alpha-D-glucosamine 6-phosphate (route II): step 2/2.</text>
</comment>
<comment type="pathway">
    <text evidence="1">Nucleotide-sugar biosynthesis; UDP-N-acetyl-alpha-D-glucosamine biosynthesis; UDP-N-acetyl-alpha-D-glucosamine from N-acetyl-alpha-D-glucosamine 1-phosphate: step 1/1.</text>
</comment>
<comment type="pathway">
    <text evidence="1">Bacterial outer membrane biogenesis; LPS lipid A biosynthesis.</text>
</comment>
<comment type="subunit">
    <text evidence="1">Homotrimer.</text>
</comment>
<comment type="subcellular location">
    <subcellularLocation>
        <location evidence="1">Cytoplasm</location>
    </subcellularLocation>
</comment>
<comment type="similarity">
    <text evidence="1">In the N-terminal section; belongs to the N-acetylglucosamine-1-phosphate uridyltransferase family.</text>
</comment>
<comment type="similarity">
    <text evidence="1">In the C-terminal section; belongs to the transferase hexapeptide repeat family.</text>
</comment>
<protein>
    <recommendedName>
        <fullName evidence="1">Bifunctional protein GlmU</fullName>
    </recommendedName>
    <domain>
        <recommendedName>
            <fullName evidence="1">UDP-N-acetylglucosamine pyrophosphorylase</fullName>
            <ecNumber evidence="1">2.7.7.23</ecNumber>
        </recommendedName>
        <alternativeName>
            <fullName evidence="1">N-acetylglucosamine-1-phosphate uridyltransferase</fullName>
        </alternativeName>
    </domain>
    <domain>
        <recommendedName>
            <fullName evidence="1">Glucosamine-1-phosphate N-acetyltransferase</fullName>
            <ecNumber evidence="1">2.3.1.157</ecNumber>
        </recommendedName>
    </domain>
</protein>
<feature type="chain" id="PRO_1000186449" description="Bifunctional protein GlmU">
    <location>
        <begin position="1"/>
        <end position="456"/>
    </location>
</feature>
<feature type="region of interest" description="Pyrophosphorylase" evidence="1">
    <location>
        <begin position="1"/>
        <end position="229"/>
    </location>
</feature>
<feature type="region of interest" description="Linker" evidence="1">
    <location>
        <begin position="230"/>
        <end position="250"/>
    </location>
</feature>
<feature type="region of interest" description="N-acetyltransferase" evidence="1">
    <location>
        <begin position="251"/>
        <end position="456"/>
    </location>
</feature>
<feature type="active site" description="Proton acceptor" evidence="1">
    <location>
        <position position="363"/>
    </location>
</feature>
<feature type="binding site" evidence="1">
    <location>
        <begin position="11"/>
        <end position="14"/>
    </location>
    <ligand>
        <name>UDP-N-acetyl-alpha-D-glucosamine</name>
        <dbReference type="ChEBI" id="CHEBI:57705"/>
    </ligand>
</feature>
<feature type="binding site" evidence="1">
    <location>
        <position position="25"/>
    </location>
    <ligand>
        <name>UDP-N-acetyl-alpha-D-glucosamine</name>
        <dbReference type="ChEBI" id="CHEBI:57705"/>
    </ligand>
</feature>
<feature type="binding site" evidence="1">
    <location>
        <position position="76"/>
    </location>
    <ligand>
        <name>UDP-N-acetyl-alpha-D-glucosamine</name>
        <dbReference type="ChEBI" id="CHEBI:57705"/>
    </ligand>
</feature>
<feature type="binding site" evidence="1">
    <location>
        <begin position="81"/>
        <end position="82"/>
    </location>
    <ligand>
        <name>UDP-N-acetyl-alpha-D-glucosamine</name>
        <dbReference type="ChEBI" id="CHEBI:57705"/>
    </ligand>
</feature>
<feature type="binding site" evidence="1">
    <location>
        <begin position="103"/>
        <end position="105"/>
    </location>
    <ligand>
        <name>UDP-N-acetyl-alpha-D-glucosamine</name>
        <dbReference type="ChEBI" id="CHEBI:57705"/>
    </ligand>
</feature>
<feature type="binding site" evidence="1">
    <location>
        <position position="105"/>
    </location>
    <ligand>
        <name>Mg(2+)</name>
        <dbReference type="ChEBI" id="CHEBI:18420"/>
    </ligand>
</feature>
<feature type="binding site" evidence="1">
    <location>
        <position position="140"/>
    </location>
    <ligand>
        <name>UDP-N-acetyl-alpha-D-glucosamine</name>
        <dbReference type="ChEBI" id="CHEBI:57705"/>
    </ligand>
</feature>
<feature type="binding site" evidence="1">
    <location>
        <position position="154"/>
    </location>
    <ligand>
        <name>UDP-N-acetyl-alpha-D-glucosamine</name>
        <dbReference type="ChEBI" id="CHEBI:57705"/>
    </ligand>
</feature>
<feature type="binding site" evidence="1">
    <location>
        <position position="169"/>
    </location>
    <ligand>
        <name>UDP-N-acetyl-alpha-D-glucosamine</name>
        <dbReference type="ChEBI" id="CHEBI:57705"/>
    </ligand>
</feature>
<feature type="binding site" evidence="1">
    <location>
        <position position="227"/>
    </location>
    <ligand>
        <name>Mg(2+)</name>
        <dbReference type="ChEBI" id="CHEBI:18420"/>
    </ligand>
</feature>
<feature type="binding site" evidence="1">
    <location>
        <position position="227"/>
    </location>
    <ligand>
        <name>UDP-N-acetyl-alpha-D-glucosamine</name>
        <dbReference type="ChEBI" id="CHEBI:57705"/>
    </ligand>
</feature>
<feature type="binding site" evidence="1">
    <location>
        <position position="333"/>
    </location>
    <ligand>
        <name>UDP-N-acetyl-alpha-D-glucosamine</name>
        <dbReference type="ChEBI" id="CHEBI:57705"/>
    </ligand>
</feature>
<feature type="binding site" evidence="1">
    <location>
        <position position="351"/>
    </location>
    <ligand>
        <name>UDP-N-acetyl-alpha-D-glucosamine</name>
        <dbReference type="ChEBI" id="CHEBI:57705"/>
    </ligand>
</feature>
<feature type="binding site" evidence="1">
    <location>
        <position position="366"/>
    </location>
    <ligand>
        <name>UDP-N-acetyl-alpha-D-glucosamine</name>
        <dbReference type="ChEBI" id="CHEBI:57705"/>
    </ligand>
</feature>
<feature type="binding site" evidence="1">
    <location>
        <position position="377"/>
    </location>
    <ligand>
        <name>UDP-N-acetyl-alpha-D-glucosamine</name>
        <dbReference type="ChEBI" id="CHEBI:57705"/>
    </ligand>
</feature>
<feature type="binding site" evidence="1">
    <location>
        <position position="380"/>
    </location>
    <ligand>
        <name>acetyl-CoA</name>
        <dbReference type="ChEBI" id="CHEBI:57288"/>
    </ligand>
</feature>
<feature type="binding site" evidence="1">
    <location>
        <begin position="386"/>
        <end position="387"/>
    </location>
    <ligand>
        <name>acetyl-CoA</name>
        <dbReference type="ChEBI" id="CHEBI:57288"/>
    </ligand>
</feature>
<feature type="binding site" evidence="1">
    <location>
        <position position="405"/>
    </location>
    <ligand>
        <name>acetyl-CoA</name>
        <dbReference type="ChEBI" id="CHEBI:57288"/>
    </ligand>
</feature>
<feature type="binding site" evidence="1">
    <location>
        <position position="423"/>
    </location>
    <ligand>
        <name>acetyl-CoA</name>
        <dbReference type="ChEBI" id="CHEBI:57288"/>
    </ligand>
</feature>
<feature type="binding site" evidence="1">
    <location>
        <position position="440"/>
    </location>
    <ligand>
        <name>acetyl-CoA</name>
        <dbReference type="ChEBI" id="CHEBI:57288"/>
    </ligand>
</feature>